<accession>Q7NCQ1</accession>
<comment type="function">
    <text evidence="1">Specifically methylates the N4 position of cytidine in position 1402 (C1402) of 16S rRNA.</text>
</comment>
<comment type="catalytic activity">
    <reaction evidence="1">
        <text>cytidine(1402) in 16S rRNA + S-adenosyl-L-methionine = N(4)-methylcytidine(1402) in 16S rRNA + S-adenosyl-L-homocysteine + H(+)</text>
        <dbReference type="Rhea" id="RHEA:42928"/>
        <dbReference type="Rhea" id="RHEA-COMP:10286"/>
        <dbReference type="Rhea" id="RHEA-COMP:10287"/>
        <dbReference type="ChEBI" id="CHEBI:15378"/>
        <dbReference type="ChEBI" id="CHEBI:57856"/>
        <dbReference type="ChEBI" id="CHEBI:59789"/>
        <dbReference type="ChEBI" id="CHEBI:74506"/>
        <dbReference type="ChEBI" id="CHEBI:82748"/>
        <dbReference type="EC" id="2.1.1.199"/>
    </reaction>
</comment>
<comment type="subcellular location">
    <subcellularLocation>
        <location evidence="1">Cytoplasm</location>
    </subcellularLocation>
</comment>
<comment type="similarity">
    <text evidence="1">Belongs to the methyltransferase superfamily. RsmH family.</text>
</comment>
<organism>
    <name type="scientific">Gloeobacter violaceus (strain ATCC 29082 / PCC 7421)</name>
    <dbReference type="NCBI Taxonomy" id="251221"/>
    <lineage>
        <taxon>Bacteria</taxon>
        <taxon>Bacillati</taxon>
        <taxon>Cyanobacteriota</taxon>
        <taxon>Cyanophyceae</taxon>
        <taxon>Gloeobacterales</taxon>
        <taxon>Gloeobacteraceae</taxon>
        <taxon>Gloeobacter</taxon>
    </lineage>
</organism>
<dbReference type="EC" id="2.1.1.199" evidence="1"/>
<dbReference type="EMBL" id="BA000045">
    <property type="protein sequence ID" value="BAC90868.1"/>
    <property type="molecule type" value="Genomic_DNA"/>
</dbReference>
<dbReference type="RefSeq" id="NP_925873.1">
    <property type="nucleotide sequence ID" value="NC_005125.1"/>
</dbReference>
<dbReference type="RefSeq" id="WP_011142921.1">
    <property type="nucleotide sequence ID" value="NC_005125.1"/>
</dbReference>
<dbReference type="SMR" id="Q7NCQ1"/>
<dbReference type="FunCoup" id="Q7NCQ1">
    <property type="interactions" value="263"/>
</dbReference>
<dbReference type="STRING" id="251221.gene:10760431"/>
<dbReference type="EnsemblBacteria" id="BAC90868">
    <property type="protein sequence ID" value="BAC90868"/>
    <property type="gene ID" value="BAC90868"/>
</dbReference>
<dbReference type="KEGG" id="gvi:glr2927"/>
<dbReference type="PATRIC" id="fig|251221.4.peg.2956"/>
<dbReference type="eggNOG" id="COG0275">
    <property type="taxonomic scope" value="Bacteria"/>
</dbReference>
<dbReference type="HOGENOM" id="CLU_038422_3_0_3"/>
<dbReference type="InParanoid" id="Q7NCQ1"/>
<dbReference type="OrthoDB" id="9806637at2"/>
<dbReference type="PhylomeDB" id="Q7NCQ1"/>
<dbReference type="Proteomes" id="UP000000557">
    <property type="component" value="Chromosome"/>
</dbReference>
<dbReference type="GO" id="GO:0005737">
    <property type="term" value="C:cytoplasm"/>
    <property type="evidence" value="ECO:0000318"/>
    <property type="project" value="GO_Central"/>
</dbReference>
<dbReference type="GO" id="GO:0071424">
    <property type="term" value="F:rRNA (cytosine-N4-)-methyltransferase activity"/>
    <property type="evidence" value="ECO:0000318"/>
    <property type="project" value="GO_Central"/>
</dbReference>
<dbReference type="GO" id="GO:0070475">
    <property type="term" value="P:rRNA base methylation"/>
    <property type="evidence" value="ECO:0000318"/>
    <property type="project" value="GO_Central"/>
</dbReference>
<dbReference type="CDD" id="cd02440">
    <property type="entry name" value="AdoMet_MTases"/>
    <property type="match status" value="1"/>
</dbReference>
<dbReference type="Gene3D" id="1.10.150.170">
    <property type="entry name" value="Putative methyltransferase TM0872, insert domain"/>
    <property type="match status" value="1"/>
</dbReference>
<dbReference type="Gene3D" id="3.40.50.150">
    <property type="entry name" value="Vaccinia Virus protein VP39"/>
    <property type="match status" value="1"/>
</dbReference>
<dbReference type="HAMAP" id="MF_01007">
    <property type="entry name" value="16SrRNA_methyltr_H"/>
    <property type="match status" value="1"/>
</dbReference>
<dbReference type="InterPro" id="IPR002903">
    <property type="entry name" value="RsmH"/>
</dbReference>
<dbReference type="InterPro" id="IPR023397">
    <property type="entry name" value="SAM-dep_MeTrfase_MraW_recog"/>
</dbReference>
<dbReference type="InterPro" id="IPR029063">
    <property type="entry name" value="SAM-dependent_MTases_sf"/>
</dbReference>
<dbReference type="NCBIfam" id="TIGR00006">
    <property type="entry name" value="16S rRNA (cytosine(1402)-N(4))-methyltransferase RsmH"/>
    <property type="match status" value="1"/>
</dbReference>
<dbReference type="PANTHER" id="PTHR11265:SF0">
    <property type="entry name" value="12S RRNA N4-METHYLCYTIDINE METHYLTRANSFERASE"/>
    <property type="match status" value="1"/>
</dbReference>
<dbReference type="PANTHER" id="PTHR11265">
    <property type="entry name" value="S-ADENOSYL-METHYLTRANSFERASE MRAW"/>
    <property type="match status" value="1"/>
</dbReference>
<dbReference type="Pfam" id="PF01795">
    <property type="entry name" value="Methyltransf_5"/>
    <property type="match status" value="1"/>
</dbReference>
<dbReference type="PIRSF" id="PIRSF004486">
    <property type="entry name" value="MraW"/>
    <property type="match status" value="1"/>
</dbReference>
<dbReference type="SUPFAM" id="SSF81799">
    <property type="entry name" value="Putative methyltransferase TM0872, insert domain"/>
    <property type="match status" value="1"/>
</dbReference>
<dbReference type="SUPFAM" id="SSF53335">
    <property type="entry name" value="S-adenosyl-L-methionine-dependent methyltransferases"/>
    <property type="match status" value="1"/>
</dbReference>
<proteinExistence type="inferred from homology"/>
<feature type="chain" id="PRO_0000108632" description="Ribosomal RNA small subunit methyltransferase H">
    <location>
        <begin position="1"/>
        <end position="314"/>
    </location>
</feature>
<feature type="binding site" evidence="1">
    <location>
        <begin position="58"/>
        <end position="60"/>
    </location>
    <ligand>
        <name>S-adenosyl-L-methionine</name>
        <dbReference type="ChEBI" id="CHEBI:59789"/>
    </ligand>
</feature>
<feature type="binding site" evidence="1">
    <location>
        <position position="76"/>
    </location>
    <ligand>
        <name>S-adenosyl-L-methionine</name>
        <dbReference type="ChEBI" id="CHEBI:59789"/>
    </ligand>
</feature>
<feature type="binding site" evidence="1">
    <location>
        <position position="103"/>
    </location>
    <ligand>
        <name>S-adenosyl-L-methionine</name>
        <dbReference type="ChEBI" id="CHEBI:59789"/>
    </ligand>
</feature>
<feature type="binding site" evidence="1">
    <location>
        <position position="119"/>
    </location>
    <ligand>
        <name>S-adenosyl-L-methionine</name>
        <dbReference type="ChEBI" id="CHEBI:59789"/>
    </ligand>
</feature>
<feature type="binding site" evidence="1">
    <location>
        <position position="126"/>
    </location>
    <ligand>
        <name>S-adenosyl-L-methionine</name>
        <dbReference type="ChEBI" id="CHEBI:59789"/>
    </ligand>
</feature>
<reference key="1">
    <citation type="journal article" date="2003" name="DNA Res.">
        <title>Complete genome structure of Gloeobacter violaceus PCC 7421, a cyanobacterium that lacks thylakoids.</title>
        <authorList>
            <person name="Nakamura Y."/>
            <person name="Kaneko T."/>
            <person name="Sato S."/>
            <person name="Mimuro M."/>
            <person name="Miyashita H."/>
            <person name="Tsuchiya T."/>
            <person name="Sasamoto S."/>
            <person name="Watanabe A."/>
            <person name="Kawashima K."/>
            <person name="Kishida Y."/>
            <person name="Kiyokawa C."/>
            <person name="Kohara M."/>
            <person name="Matsumoto M."/>
            <person name="Matsuno A."/>
            <person name="Nakazaki N."/>
            <person name="Shimpo S."/>
            <person name="Takeuchi C."/>
            <person name="Yamada M."/>
            <person name="Tabata S."/>
        </authorList>
    </citation>
    <scope>NUCLEOTIDE SEQUENCE [LARGE SCALE GENOMIC DNA]</scope>
    <source>
        <strain>ATCC 29082 / PCC 7421</strain>
    </source>
</reference>
<gene>
    <name evidence="1" type="primary">rsmH</name>
    <name type="synonym">mraW</name>
    <name type="ordered locus">glr2927</name>
</gene>
<protein>
    <recommendedName>
        <fullName evidence="1">Ribosomal RNA small subunit methyltransferase H</fullName>
        <ecNumber evidence="1">2.1.1.199</ecNumber>
    </recommendedName>
    <alternativeName>
        <fullName evidence="1">16S rRNA m(4)C1402 methyltransferase</fullName>
    </alternativeName>
    <alternativeName>
        <fullName evidence="1">rRNA (cytosine-N(4)-)-methyltransferase RsmH</fullName>
    </alternativeName>
</protein>
<keyword id="KW-0963">Cytoplasm</keyword>
<keyword id="KW-0489">Methyltransferase</keyword>
<keyword id="KW-1185">Reference proteome</keyword>
<keyword id="KW-0698">rRNA processing</keyword>
<keyword id="KW-0949">S-adenosyl-L-methionine</keyword>
<keyword id="KW-0808">Transferase</keyword>
<evidence type="ECO:0000255" key="1">
    <source>
        <dbReference type="HAMAP-Rule" id="MF_01007"/>
    </source>
</evidence>
<name>RSMH_GLOVI</name>
<sequence>MRQDLTGTPRFFRLTQGYPGRAHSAVNTLHRSVLLEETIVGLQVHPGGLYLDATVGLGGHSEAILRTESTRVVALDQDEDALAQARLRLAPFGERVRFEHINFAEFEPGEERFDGIVADLGVSSMQLDSPERGFSWRFESPLDMRMDGGGEAETAADLVNTCSAEQLSDLFWRYGEERFSRRIARRIVERRPLRTTTELAAVVASAIPTRQPIHPATRVFQALRIAVNGEVAALETFLERSPDWLVPGGRLAVISFHSLEDRPVKHRWRADPRLEVLTRKTITAGEAEIQSNPRARSARLRLARRLSPSEESRS</sequence>